<accession>Q94BQ5</accession>
<accession>B9DGZ6</accession>
<gene>
    <name evidence="7 8" type="primary">FBP1</name>
    <name evidence="11" type="ordered locus">At5g27830</name>
    <name evidence="12" type="ORF">T1G16.160</name>
</gene>
<name>FBP1_ARATH</name>
<protein>
    <recommendedName>
        <fullName evidence="7 8">Folate-binding protein 1</fullName>
        <shortName evidence="7 8">AtFBP1</shortName>
    </recommendedName>
</protein>
<comment type="function">
    <text evidence="6 10">Folic acid-binding protein involved in salicylic acid- (SA-) induced folate accumulation by triggering uptake and accumulation of folic acid in cells (PubMed:29231735). May be implicated in the transport of the folates from the site of production (leaves) to the site of storage (fruits and seeds) and utilization (roots) (Probable).</text>
</comment>
<comment type="subcellular location">
    <subcellularLocation>
        <location evidence="3">Membrane</location>
        <topology evidence="3">Single-pass type I membrane protein</topology>
    </subcellularLocation>
</comment>
<comment type="alternative products">
    <event type="alternative splicing"/>
    <isoform>
        <id>Q94BQ5-1</id>
        <name>1</name>
        <sequence type="displayed"/>
    </isoform>
    <isoform>
        <id>Q94BQ5-2</id>
        <name>2</name>
        <sequence type="described" ref="VSP_061776"/>
    </isoform>
</comment>
<comment type="tissue specificity">
    <text evidence="6">Expressed in leaves.</text>
</comment>
<comment type="induction">
    <text evidence="5 6">Induced by salicylic acid (SA), correlating with the accumulation of folates.</text>
</comment>
<comment type="similarity">
    <text evidence="9">Belongs to the folate receptor family.</text>
</comment>
<dbReference type="EMBL" id="AC069556">
    <property type="status" value="NOT_ANNOTATED_CDS"/>
    <property type="molecule type" value="Genomic_DNA"/>
</dbReference>
<dbReference type="EMBL" id="CP002688">
    <property type="protein sequence ID" value="AED93729.1"/>
    <property type="molecule type" value="Genomic_DNA"/>
</dbReference>
<dbReference type="EMBL" id="AY039962">
    <property type="protein sequence ID" value="AAK64139.1"/>
    <property type="molecule type" value="mRNA"/>
</dbReference>
<dbReference type="EMBL" id="BT000985">
    <property type="protein sequence ID" value="AAN41385.1"/>
    <property type="molecule type" value="mRNA"/>
</dbReference>
<dbReference type="EMBL" id="AK317340">
    <property type="protein sequence ID" value="BAH20013.1"/>
    <property type="molecule type" value="mRNA"/>
</dbReference>
<dbReference type="RefSeq" id="NP_198135.1">
    <molecule id="Q94BQ5-1"/>
    <property type="nucleotide sequence ID" value="NM_122665.4"/>
</dbReference>
<dbReference type="SMR" id="Q94BQ5"/>
<dbReference type="FunCoup" id="Q94BQ5">
    <property type="interactions" value="608"/>
</dbReference>
<dbReference type="GlyGen" id="Q94BQ5">
    <property type="glycosylation" value="1 site"/>
</dbReference>
<dbReference type="ProteomicsDB" id="183304"/>
<dbReference type="EnsemblPlants" id="AT5G27830.1">
    <molecule id="Q94BQ5-1"/>
    <property type="protein sequence ID" value="AT5G27830.1"/>
    <property type="gene ID" value="AT5G27830"/>
</dbReference>
<dbReference type="GeneID" id="832845"/>
<dbReference type="Gramene" id="AT5G27830.1">
    <molecule id="Q94BQ5-1"/>
    <property type="protein sequence ID" value="AT5G27830.1"/>
    <property type="gene ID" value="AT5G27830"/>
</dbReference>
<dbReference type="KEGG" id="ath:AT5G27830"/>
<dbReference type="Araport" id="AT5G27830"/>
<dbReference type="TAIR" id="AT5G27830"/>
<dbReference type="OMA" id="EANPECL"/>
<dbReference type="PRO" id="PR:Q94BQ5"/>
<dbReference type="Proteomes" id="UP000006548">
    <property type="component" value="Chromosome 5"/>
</dbReference>
<dbReference type="ExpressionAtlas" id="Q94BQ5">
    <property type="expression patterns" value="baseline and differential"/>
</dbReference>
<dbReference type="GO" id="GO:0016020">
    <property type="term" value="C:membrane"/>
    <property type="evidence" value="ECO:0007669"/>
    <property type="project" value="UniProtKB-SubCell"/>
</dbReference>
<dbReference type="GO" id="GO:0005542">
    <property type="term" value="F:folic acid binding"/>
    <property type="evidence" value="ECO:0000314"/>
    <property type="project" value="UniProtKB"/>
</dbReference>
<dbReference type="GO" id="GO:0008517">
    <property type="term" value="F:folic acid transmembrane transporter activity"/>
    <property type="evidence" value="ECO:0000314"/>
    <property type="project" value="UniProtKB"/>
</dbReference>
<dbReference type="GO" id="GO:0015884">
    <property type="term" value="P:folic acid transport"/>
    <property type="evidence" value="ECO:0000314"/>
    <property type="project" value="UniProtKB"/>
</dbReference>
<dbReference type="GO" id="GO:0009751">
    <property type="term" value="P:response to salicylic acid"/>
    <property type="evidence" value="ECO:0000270"/>
    <property type="project" value="UniProtKB"/>
</dbReference>
<dbReference type="InterPro" id="IPR053305">
    <property type="entry name" value="Folate-binding_rcpt-like"/>
</dbReference>
<dbReference type="InterPro" id="IPR018143">
    <property type="entry name" value="Folate_rcpt-like"/>
</dbReference>
<dbReference type="PANTHER" id="PTHR37390:SF1">
    <property type="entry name" value="FOLATE-BINDING PROTEIN 1"/>
    <property type="match status" value="1"/>
</dbReference>
<dbReference type="PANTHER" id="PTHR37390">
    <property type="entry name" value="OS02G0592500 PROTEIN"/>
    <property type="match status" value="1"/>
</dbReference>
<dbReference type="Pfam" id="PF03024">
    <property type="entry name" value="Folate_rec"/>
    <property type="match status" value="1"/>
</dbReference>
<sequence length="300" mass="33104">MGRCLTKKVFLIQSPILFLHLLISLSSGAVKPDLKGVCVSKGGRFPPYELEGKPPKSVGRGSKDLTLCRVFRKKTCCSSVQTNPAFVAVRNLATYGEASQECLELFELLECSICNPNVGIQPGPPRICASFCDRVFEACKDAYFASNALKRVIGPCGVNDDIICIKASNWESNGTSFCEAAGFAVQRNDDSREKPCYGSKASLESVVESWSRDSRKETPLKTETLSCFKDLLQWVREMTTIQKISLGMSFLIAGMFLIRQSNNRNQKQRLAAIQRTARRLRGNGNGDSYSAAINRRTSSD</sequence>
<keyword id="KW-0025">Alternative splicing</keyword>
<keyword id="KW-0903">Direct protein sequencing</keyword>
<keyword id="KW-1015">Disulfide bond</keyword>
<keyword id="KW-0290">Folate-binding</keyword>
<keyword id="KW-0325">Glycoprotein</keyword>
<keyword id="KW-0472">Membrane</keyword>
<keyword id="KW-0675">Receptor</keyword>
<keyword id="KW-1185">Reference proteome</keyword>
<keyword id="KW-0732">Signal</keyword>
<keyword id="KW-0812">Transmembrane</keyword>
<keyword id="KW-1133">Transmembrane helix</keyword>
<organism>
    <name type="scientific">Arabidopsis thaliana</name>
    <name type="common">Mouse-ear cress</name>
    <dbReference type="NCBI Taxonomy" id="3702"/>
    <lineage>
        <taxon>Eukaryota</taxon>
        <taxon>Viridiplantae</taxon>
        <taxon>Streptophyta</taxon>
        <taxon>Embryophyta</taxon>
        <taxon>Tracheophyta</taxon>
        <taxon>Spermatophyta</taxon>
        <taxon>Magnoliopsida</taxon>
        <taxon>eudicotyledons</taxon>
        <taxon>Gunneridae</taxon>
        <taxon>Pentapetalae</taxon>
        <taxon>rosids</taxon>
        <taxon>malvids</taxon>
        <taxon>Brassicales</taxon>
        <taxon>Brassicaceae</taxon>
        <taxon>Camelineae</taxon>
        <taxon>Arabidopsis</taxon>
    </lineage>
</organism>
<proteinExistence type="evidence at protein level"/>
<evidence type="ECO:0000250" key="1">
    <source>
        <dbReference type="UniProtKB" id="P02752"/>
    </source>
</evidence>
<evidence type="ECO:0000250" key="2">
    <source>
        <dbReference type="UniProtKB" id="P15328"/>
    </source>
</evidence>
<evidence type="ECO:0000255" key="3"/>
<evidence type="ECO:0000255" key="4">
    <source>
        <dbReference type="PROSITE-ProRule" id="PRU00498"/>
    </source>
</evidence>
<evidence type="ECO:0000269" key="5">
    <source>
    </source>
</evidence>
<evidence type="ECO:0000269" key="6">
    <source>
    </source>
</evidence>
<evidence type="ECO:0000303" key="7">
    <source>
    </source>
</evidence>
<evidence type="ECO:0000303" key="8">
    <source>
    </source>
</evidence>
<evidence type="ECO:0000305" key="9"/>
<evidence type="ECO:0000305" key="10">
    <source>
    </source>
</evidence>
<evidence type="ECO:0000312" key="11">
    <source>
        <dbReference type="Araport" id="AT5G27830"/>
    </source>
</evidence>
<evidence type="ECO:0000312" key="12">
    <source>
        <dbReference type="EMBL" id="AED93729.1"/>
    </source>
</evidence>
<reference key="1">
    <citation type="journal article" date="2000" name="Nature">
        <title>Sequence and analysis of chromosome 5 of the plant Arabidopsis thaliana.</title>
        <authorList>
            <person name="Tabata S."/>
            <person name="Kaneko T."/>
            <person name="Nakamura Y."/>
            <person name="Kotani H."/>
            <person name="Kato T."/>
            <person name="Asamizu E."/>
            <person name="Miyajima N."/>
            <person name="Sasamoto S."/>
            <person name="Kimura T."/>
            <person name="Hosouchi T."/>
            <person name="Kawashima K."/>
            <person name="Kohara M."/>
            <person name="Matsumoto M."/>
            <person name="Matsuno A."/>
            <person name="Muraki A."/>
            <person name="Nakayama S."/>
            <person name="Nakazaki N."/>
            <person name="Naruo K."/>
            <person name="Okumura S."/>
            <person name="Shinpo S."/>
            <person name="Takeuchi C."/>
            <person name="Wada T."/>
            <person name="Watanabe A."/>
            <person name="Yamada M."/>
            <person name="Yasuda M."/>
            <person name="Sato S."/>
            <person name="de la Bastide M."/>
            <person name="Huang E."/>
            <person name="Spiegel L."/>
            <person name="Gnoj L."/>
            <person name="O'Shaughnessy A."/>
            <person name="Preston R."/>
            <person name="Habermann K."/>
            <person name="Murray J."/>
            <person name="Johnson D."/>
            <person name="Rohlfing T."/>
            <person name="Nelson J."/>
            <person name="Stoneking T."/>
            <person name="Pepin K."/>
            <person name="Spieth J."/>
            <person name="Sekhon M."/>
            <person name="Armstrong J."/>
            <person name="Becker M."/>
            <person name="Belter E."/>
            <person name="Cordum H."/>
            <person name="Cordes M."/>
            <person name="Courtney L."/>
            <person name="Courtney W."/>
            <person name="Dante M."/>
            <person name="Du H."/>
            <person name="Edwards J."/>
            <person name="Fryman J."/>
            <person name="Haakensen B."/>
            <person name="Lamar E."/>
            <person name="Latreille P."/>
            <person name="Leonard S."/>
            <person name="Meyer R."/>
            <person name="Mulvaney E."/>
            <person name="Ozersky P."/>
            <person name="Riley A."/>
            <person name="Strowmatt C."/>
            <person name="Wagner-McPherson C."/>
            <person name="Wollam A."/>
            <person name="Yoakum M."/>
            <person name="Bell M."/>
            <person name="Dedhia N."/>
            <person name="Parnell L."/>
            <person name="Shah R."/>
            <person name="Rodriguez M."/>
            <person name="Hoon See L."/>
            <person name="Vil D."/>
            <person name="Baker J."/>
            <person name="Kirchoff K."/>
            <person name="Toth K."/>
            <person name="King L."/>
            <person name="Bahret A."/>
            <person name="Miller B."/>
            <person name="Marra M.A."/>
            <person name="Martienssen R."/>
            <person name="McCombie W.R."/>
            <person name="Wilson R.K."/>
            <person name="Murphy G."/>
            <person name="Bancroft I."/>
            <person name="Volckaert G."/>
            <person name="Wambutt R."/>
            <person name="Duesterhoeft A."/>
            <person name="Stiekema W."/>
            <person name="Pohl T."/>
            <person name="Entian K.-D."/>
            <person name="Terryn N."/>
            <person name="Hartley N."/>
            <person name="Bent E."/>
            <person name="Johnson S."/>
            <person name="Langham S.-A."/>
            <person name="McCullagh B."/>
            <person name="Robben J."/>
            <person name="Grymonprez B."/>
            <person name="Zimmermann W."/>
            <person name="Ramsperger U."/>
            <person name="Wedler H."/>
            <person name="Balke K."/>
            <person name="Wedler E."/>
            <person name="Peters S."/>
            <person name="van Staveren M."/>
            <person name="Dirkse W."/>
            <person name="Mooijman P."/>
            <person name="Klein Lankhorst R."/>
            <person name="Weitzenegger T."/>
            <person name="Bothe G."/>
            <person name="Rose M."/>
            <person name="Hauf J."/>
            <person name="Berneiser S."/>
            <person name="Hempel S."/>
            <person name="Feldpausch M."/>
            <person name="Lamberth S."/>
            <person name="Villarroel R."/>
            <person name="Gielen J."/>
            <person name="Ardiles W."/>
            <person name="Bents O."/>
            <person name="Lemcke K."/>
            <person name="Kolesov G."/>
            <person name="Mayer K.F.X."/>
            <person name="Rudd S."/>
            <person name="Schoof H."/>
            <person name="Schueller C."/>
            <person name="Zaccaria P."/>
            <person name="Mewes H.-W."/>
            <person name="Bevan M."/>
            <person name="Fransz P.F."/>
        </authorList>
    </citation>
    <scope>NUCLEOTIDE SEQUENCE [LARGE SCALE GENOMIC DNA]</scope>
    <source>
        <strain>cv. Columbia</strain>
    </source>
</reference>
<reference key="2">
    <citation type="journal article" date="2017" name="Plant J.">
        <title>Araport11: a complete reannotation of the Arabidopsis thaliana reference genome.</title>
        <authorList>
            <person name="Cheng C.Y."/>
            <person name="Krishnakumar V."/>
            <person name="Chan A.P."/>
            <person name="Thibaud-Nissen F."/>
            <person name="Schobel S."/>
            <person name="Town C.D."/>
        </authorList>
    </citation>
    <scope>GENOME REANNOTATION</scope>
    <source>
        <strain>cv. Columbia</strain>
    </source>
</reference>
<reference key="3">
    <citation type="journal article" date="2003" name="Science">
        <title>Empirical analysis of transcriptional activity in the Arabidopsis genome.</title>
        <authorList>
            <person name="Yamada K."/>
            <person name="Lim J."/>
            <person name="Dale J.M."/>
            <person name="Chen H."/>
            <person name="Shinn P."/>
            <person name="Palm C.J."/>
            <person name="Southwick A.M."/>
            <person name="Wu H.C."/>
            <person name="Kim C.J."/>
            <person name="Nguyen M."/>
            <person name="Pham P.K."/>
            <person name="Cheuk R.F."/>
            <person name="Karlin-Newmann G."/>
            <person name="Liu S.X."/>
            <person name="Lam B."/>
            <person name="Sakano H."/>
            <person name="Wu T."/>
            <person name="Yu G."/>
            <person name="Miranda M."/>
            <person name="Quach H.L."/>
            <person name="Tripp M."/>
            <person name="Chang C.H."/>
            <person name="Lee J.M."/>
            <person name="Toriumi M.J."/>
            <person name="Chan M.M."/>
            <person name="Tang C.C."/>
            <person name="Onodera C.S."/>
            <person name="Deng J.M."/>
            <person name="Akiyama K."/>
            <person name="Ansari Y."/>
            <person name="Arakawa T."/>
            <person name="Banh J."/>
            <person name="Banno F."/>
            <person name="Bowser L."/>
            <person name="Brooks S.Y."/>
            <person name="Carninci P."/>
            <person name="Chao Q."/>
            <person name="Choy N."/>
            <person name="Enju A."/>
            <person name="Goldsmith A.D."/>
            <person name="Gurjal M."/>
            <person name="Hansen N.F."/>
            <person name="Hayashizaki Y."/>
            <person name="Johnson-Hopson C."/>
            <person name="Hsuan V.W."/>
            <person name="Iida K."/>
            <person name="Karnes M."/>
            <person name="Khan S."/>
            <person name="Koesema E."/>
            <person name="Ishida J."/>
            <person name="Jiang P.X."/>
            <person name="Jones T."/>
            <person name="Kawai J."/>
            <person name="Kamiya A."/>
            <person name="Meyers C."/>
            <person name="Nakajima M."/>
            <person name="Narusaka M."/>
            <person name="Seki M."/>
            <person name="Sakurai T."/>
            <person name="Satou M."/>
            <person name="Tamse R."/>
            <person name="Vaysberg M."/>
            <person name="Wallender E.K."/>
            <person name="Wong C."/>
            <person name="Yamamura Y."/>
            <person name="Yuan S."/>
            <person name="Shinozaki K."/>
            <person name="Davis R.W."/>
            <person name="Theologis A."/>
            <person name="Ecker J.R."/>
        </authorList>
    </citation>
    <scope>NUCLEOTIDE SEQUENCE [LARGE SCALE MRNA] (ISOFORM 1)</scope>
    <source>
        <strain>cv. Columbia</strain>
    </source>
</reference>
<reference key="4">
    <citation type="journal article" date="2009" name="DNA Res.">
        <title>Analysis of multiple occurrences of alternative splicing events in Arabidopsis thaliana using novel sequenced full-length cDNAs.</title>
        <authorList>
            <person name="Iida K."/>
            <person name="Fukami-Kobayashi K."/>
            <person name="Toyoda A."/>
            <person name="Sakaki Y."/>
            <person name="Kobayashi M."/>
            <person name="Seki M."/>
            <person name="Shinozaki K."/>
        </authorList>
    </citation>
    <scope>NUCLEOTIDE SEQUENCE [LARGE SCALE MRNA] (ISOFORM 2)</scope>
    <source>
        <strain>cv. Columbia</strain>
        <tissue>Root</tissue>
    </source>
</reference>
<reference key="5">
    <citation type="journal article" date="2018" name="Food Chem.">
        <title>Evaluation of folate-binding proteins and stability of folates in plant foliages.</title>
        <authorList>
            <person name="Puthusseri B."/>
            <person name="Divya P."/>
            <person name="Veeresh L."/>
            <person name="Kumar G."/>
            <person name="Neelwarne B."/>
        </authorList>
    </citation>
    <scope>INDUCTION BY SALICYLIC ACID</scope>
    <scope>NOMENCLATURE</scope>
    <source>
        <strain>cv. Columbia</strain>
    </source>
</reference>
<reference key="6">
    <citation type="journal article" date="2018" name="J. Agric. Food Chem.">
        <title>Novel folate binding protein in Arabidopsis expressed during salicylic acid-induced folate accumulation.</title>
        <authorList>
            <person name="Puthusseri B."/>
            <person name="Divya P."/>
            <person name="Lokesh V."/>
            <person name="Kumar G."/>
            <person name="Savanur M.A."/>
            <person name="Neelwarne B."/>
        </authorList>
    </citation>
    <scope>PROTEIN SEQUENCE OF 74-80; 107-114 AND 166-173</scope>
    <scope>FUNCTION</scope>
    <scope>INDUCTION BY SALICYLIC ACID</scope>
    <scope>TISSUE SPECIFICITY</scope>
</reference>
<feature type="signal peptide" evidence="3">
    <location>
        <begin position="1"/>
        <end position="28"/>
    </location>
</feature>
<feature type="chain" id="PRO_5014312522" description="Folate-binding protein 1">
    <location>
        <begin position="29"/>
        <end position="300"/>
    </location>
</feature>
<feature type="transmembrane region" description="Helical" evidence="3">
    <location>
        <begin position="238"/>
        <end position="258"/>
    </location>
</feature>
<feature type="glycosylation site" description="N-linked (GlcNAc...) asparagine" evidence="4">
    <location>
        <position position="173"/>
    </location>
</feature>
<feature type="disulfide bond" evidence="2">
    <location>
        <begin position="38"/>
        <end position="76"/>
    </location>
</feature>
<feature type="disulfide bond" evidence="2">
    <location>
        <begin position="68"/>
        <end position="111"/>
    </location>
</feature>
<feature type="disulfide bond" evidence="2">
    <location>
        <begin position="77"/>
        <end position="114"/>
    </location>
</feature>
<feature type="disulfide bond" evidence="2">
    <location>
        <begin position="102"/>
        <end position="139"/>
    </location>
</feature>
<feature type="disulfide bond" evidence="1">
    <location>
        <begin position="132"/>
        <end position="178"/>
    </location>
</feature>
<feature type="splice variant" id="VSP_061776" description="In isoform 2.">
    <original>MGRCLTKKVFLIQSPILFLHLLISLSS</original>
    <variation>MFNEE</variation>
    <location>
        <begin position="1"/>
        <end position="27"/>
    </location>
</feature>
<feature type="sequence conflict" description="In Ref. 4; BAH20013." evidence="9" ref="4">
    <original>T</original>
    <variation>I</variation>
    <location>
        <position position="224"/>
    </location>
</feature>